<proteinExistence type="evidence at protein level"/>
<comment type="function">
    <text evidence="1">Ribonucleoside-diphosphate reductase holoenzyme provides the precursors necessary for viral DNA synthesis. Allows virus growth in non-dividing cells, as well as reactivation from latency in infected hosts. Catalyzes the biosynthesis of deoxyribonucleotides from the corresponding ribonucleotides.</text>
</comment>
<comment type="catalytic activity">
    <reaction evidence="1">
        <text>a 2'-deoxyribonucleoside 5'-diphosphate + [thioredoxin]-disulfide + H2O = a ribonucleoside 5'-diphosphate + [thioredoxin]-dithiol</text>
        <dbReference type="Rhea" id="RHEA:23252"/>
        <dbReference type="Rhea" id="RHEA-COMP:10698"/>
        <dbReference type="Rhea" id="RHEA-COMP:10700"/>
        <dbReference type="ChEBI" id="CHEBI:15377"/>
        <dbReference type="ChEBI" id="CHEBI:29950"/>
        <dbReference type="ChEBI" id="CHEBI:50058"/>
        <dbReference type="ChEBI" id="CHEBI:57930"/>
        <dbReference type="ChEBI" id="CHEBI:73316"/>
        <dbReference type="EC" id="1.17.4.1"/>
    </reaction>
</comment>
<comment type="cofactor">
    <cofactor evidence="1">
        <name>Fe cation</name>
        <dbReference type="ChEBI" id="CHEBI:24875"/>
    </cofactor>
</comment>
<comment type="subunit">
    <text evidence="1">Heterotetramer composed of a homodimer of the large subunit (R1) and a homodimer of the small subunit (R2). Larger multisubunit protein complex are also active, composed of (R1)n(R2)n.</text>
</comment>
<comment type="interaction">
    <interactant intactId="EBI-2621366">
        <id>P0C701</id>
    </interactant>
    <interactant intactId="EBI-2621061">
        <id>Q66542</id>
        <label>BNRF1</label>
    </interactant>
    <organismsDiffer>false</organismsDiffer>
    <experiments>2</experiments>
</comment>
<comment type="subcellular location">
    <subcellularLocation>
        <location evidence="1">Host membrane</location>
        <topology evidence="1">Single-pass membrane protein</topology>
    </subcellularLocation>
</comment>
<comment type="similarity">
    <text evidence="1">Belongs to the ribonucleoside diphosphate reductase small chain family.</text>
</comment>
<sequence length="302" mass="34359">MSKLLYVRDHEGFACLTVETHRNRWFAAHIVLTKDCGCLKLLNERDLEFYKFLFTFLAMAEKLVNFNIDELVTSFESHDIDHYYTEQKAMENVHGETYANILNMLFDGDRAAMNAYAEAIMADEALQAKISWLRDKVAAAVTLPEKILVFLLIEGIFFISSFYSIALLRVRGLMPGICLANNYISRDELLHTRAASLLYNSMTAKADRPRATWIQELFRTAVEVETAFIEARGEGVTLVDVRAIKQFLEATADRILGDIGQAPLYGTPPPKDCPLTYMTSIKQTNFFEQESSDYTMLVVDDL</sequence>
<feature type="chain" id="PRO_0000375968" description="Ribonucleoside-diphosphate reductase small subunit">
    <location>
        <begin position="1"/>
        <end position="302"/>
    </location>
</feature>
<feature type="transmembrane region" description="Helical" evidence="1">
    <location>
        <begin position="147"/>
        <end position="167"/>
    </location>
</feature>
<accession>P0C701</accession>
<accession>Q777G0</accession>
<gene>
    <name evidence="1" type="primary">RIR2</name>
    <name type="ORF">BaRF1</name>
</gene>
<keyword id="KW-0235">DNA replication</keyword>
<keyword id="KW-1043">Host membrane</keyword>
<keyword id="KW-0408">Iron</keyword>
<keyword id="KW-0472">Membrane</keyword>
<keyword id="KW-0479">Metal-binding</keyword>
<keyword id="KW-0560">Oxidoreductase</keyword>
<keyword id="KW-0812">Transmembrane</keyword>
<keyword id="KW-1133">Transmembrane helix</keyword>
<keyword id="KW-1251">Viral latency</keyword>
<keyword id="KW-1272">Viral reactivation from latency</keyword>
<protein>
    <recommendedName>
        <fullName evidence="1">Ribonucleoside-diphosphate reductase small subunit</fullName>
        <ecNumber evidence="1">1.17.4.1</ecNumber>
    </recommendedName>
    <alternativeName>
        <fullName evidence="1">Ribonucleotide reductase small subunit</fullName>
    </alternativeName>
</protein>
<organism>
    <name type="scientific">Epstein-Barr virus (strain GD1)</name>
    <name type="common">HHV-4</name>
    <name type="synonym">Human gammaherpesvirus 4</name>
    <dbReference type="NCBI Taxonomy" id="10376"/>
    <lineage>
        <taxon>Viruses</taxon>
        <taxon>Duplodnaviria</taxon>
        <taxon>Heunggongvirae</taxon>
        <taxon>Peploviricota</taxon>
        <taxon>Herviviricetes</taxon>
        <taxon>Herpesvirales</taxon>
        <taxon>Orthoherpesviridae</taxon>
        <taxon>Gammaherpesvirinae</taxon>
        <taxon>Lymphocryptovirus</taxon>
        <taxon>Lymphocryptovirus humangamma4</taxon>
    </lineage>
</organism>
<organismHost>
    <name type="scientific">Homo sapiens</name>
    <name type="common">Human</name>
    <dbReference type="NCBI Taxonomy" id="9606"/>
</organismHost>
<name>RIR2_EBVG</name>
<evidence type="ECO:0000255" key="1">
    <source>
        <dbReference type="HAMAP-Rule" id="MF_04028"/>
    </source>
</evidence>
<dbReference type="EC" id="1.17.4.1" evidence="1"/>
<dbReference type="EMBL" id="AY961628">
    <property type="protein sequence ID" value="AAY41106.1"/>
    <property type="molecule type" value="Genomic_DNA"/>
</dbReference>
<dbReference type="RefSeq" id="YP_401656.1">
    <property type="nucleotide sequence ID" value="NC_007605.1"/>
</dbReference>
<dbReference type="SMR" id="P0C701"/>
<dbReference type="IntAct" id="P0C701">
    <property type="interactions" value="5"/>
</dbReference>
<dbReference type="DNASU" id="3783683"/>
<dbReference type="GeneID" id="3783683"/>
<dbReference type="KEGG" id="vg:3783683"/>
<dbReference type="Proteomes" id="UP000007641">
    <property type="component" value="Genome"/>
</dbReference>
<dbReference type="GO" id="GO:0033644">
    <property type="term" value="C:host cell membrane"/>
    <property type="evidence" value="ECO:0007669"/>
    <property type="project" value="UniProtKB-SubCell"/>
</dbReference>
<dbReference type="GO" id="GO:0016020">
    <property type="term" value="C:membrane"/>
    <property type="evidence" value="ECO:0007669"/>
    <property type="project" value="UniProtKB-KW"/>
</dbReference>
<dbReference type="GO" id="GO:0046872">
    <property type="term" value="F:metal ion binding"/>
    <property type="evidence" value="ECO:0007669"/>
    <property type="project" value="UniProtKB-KW"/>
</dbReference>
<dbReference type="GO" id="GO:0004748">
    <property type="term" value="F:ribonucleoside-diphosphate reductase activity, thioredoxin disulfide as acceptor"/>
    <property type="evidence" value="ECO:0007669"/>
    <property type="project" value="UniProtKB-EC"/>
</dbReference>
<dbReference type="GO" id="GO:0009263">
    <property type="term" value="P:deoxyribonucleotide biosynthetic process"/>
    <property type="evidence" value="ECO:0007669"/>
    <property type="project" value="InterPro"/>
</dbReference>
<dbReference type="GO" id="GO:0006260">
    <property type="term" value="P:DNA replication"/>
    <property type="evidence" value="ECO:0007669"/>
    <property type="project" value="UniProtKB-KW"/>
</dbReference>
<dbReference type="GO" id="GO:0019046">
    <property type="term" value="P:release from viral latency"/>
    <property type="evidence" value="ECO:0007669"/>
    <property type="project" value="UniProtKB-KW"/>
</dbReference>
<dbReference type="CDD" id="cd01049">
    <property type="entry name" value="RNRR2"/>
    <property type="match status" value="1"/>
</dbReference>
<dbReference type="Gene3D" id="1.10.620.20">
    <property type="entry name" value="Ribonucleotide Reductase, subunit A"/>
    <property type="match status" value="1"/>
</dbReference>
<dbReference type="HAMAP" id="MF_04028">
    <property type="entry name" value="HSV_RIR2"/>
    <property type="match status" value="1"/>
</dbReference>
<dbReference type="InterPro" id="IPR009078">
    <property type="entry name" value="Ferritin-like_SF"/>
</dbReference>
<dbReference type="InterPro" id="IPR034715">
    <property type="entry name" value="HSV_RIR2"/>
</dbReference>
<dbReference type="InterPro" id="IPR012348">
    <property type="entry name" value="RNR-like"/>
</dbReference>
<dbReference type="InterPro" id="IPR033909">
    <property type="entry name" value="RNR_small"/>
</dbReference>
<dbReference type="InterPro" id="IPR030475">
    <property type="entry name" value="RNR_small_AS"/>
</dbReference>
<dbReference type="InterPro" id="IPR000358">
    <property type="entry name" value="RNR_small_fam"/>
</dbReference>
<dbReference type="PANTHER" id="PTHR23409">
    <property type="entry name" value="RIBONUCLEOSIDE-DIPHOSPHATE REDUCTASE SMALL CHAIN"/>
    <property type="match status" value="1"/>
</dbReference>
<dbReference type="PANTHER" id="PTHR23409:SF18">
    <property type="entry name" value="RIBONUCLEOSIDE-DIPHOSPHATE REDUCTASE SUBUNIT M2"/>
    <property type="match status" value="1"/>
</dbReference>
<dbReference type="Pfam" id="PF00268">
    <property type="entry name" value="Ribonuc_red_sm"/>
    <property type="match status" value="1"/>
</dbReference>
<dbReference type="SUPFAM" id="SSF47240">
    <property type="entry name" value="Ferritin-like"/>
    <property type="match status" value="1"/>
</dbReference>
<dbReference type="PROSITE" id="PS00368">
    <property type="entry name" value="RIBORED_SMALL"/>
    <property type="match status" value="1"/>
</dbReference>
<reference key="1">
    <citation type="journal article" date="2005" name="J. Virol.">
        <title>Genomic sequence analysis of Epstein-Barr virus strain GD1 from a nasopharyngeal carcinoma patient.</title>
        <authorList>
            <person name="Zeng M.-S."/>
            <person name="Li D.-J."/>
            <person name="Liu Q.-L."/>
            <person name="Song L.-B."/>
            <person name="Li M.-Z."/>
            <person name="Zhang R.-H."/>
            <person name="Yu X.-J."/>
            <person name="Wang H.-M."/>
            <person name="Ernberg I."/>
            <person name="Zeng Y.-X."/>
        </authorList>
    </citation>
    <scope>NUCLEOTIDE SEQUENCE [LARGE SCALE GENOMIC DNA]</scope>
</reference>
<reference key="2">
    <citation type="journal article" date="2009" name="Trends Biochem. Sci.">
        <title>Tinkering with a viral ribonucleotide reductase.</title>
        <authorList>
            <person name="Lembo D."/>
            <person name="Brune W."/>
        </authorList>
    </citation>
    <scope>REVIEW</scope>
</reference>